<comment type="function">
    <text evidence="1">Component of the srb8-11 complex. The srb8-11 complex is a regulatory module of the Mediator complex which is itself dependent transcription. The srb8-11 complex may be involved in the transcriptional repression of a subset of genes regulated by Mediator. It may inhibit the association of the Mediator complex with RNA polymerase II to form the holoenzyme complex. The srb8-11 complex phosphorylates the C-terminal domain (CTD) of the largest subunit of RNA polymerase II (By similarity).</text>
</comment>
<comment type="catalytic activity">
    <reaction>
        <text>L-seryl-[protein] + ATP = O-phospho-L-seryl-[protein] + ADP + H(+)</text>
        <dbReference type="Rhea" id="RHEA:17989"/>
        <dbReference type="Rhea" id="RHEA-COMP:9863"/>
        <dbReference type="Rhea" id="RHEA-COMP:11604"/>
        <dbReference type="ChEBI" id="CHEBI:15378"/>
        <dbReference type="ChEBI" id="CHEBI:29999"/>
        <dbReference type="ChEBI" id="CHEBI:30616"/>
        <dbReference type="ChEBI" id="CHEBI:83421"/>
        <dbReference type="ChEBI" id="CHEBI:456216"/>
        <dbReference type="EC" id="2.7.11.22"/>
    </reaction>
</comment>
<comment type="catalytic activity">
    <reaction>
        <text>L-threonyl-[protein] + ATP = O-phospho-L-threonyl-[protein] + ADP + H(+)</text>
        <dbReference type="Rhea" id="RHEA:46608"/>
        <dbReference type="Rhea" id="RHEA-COMP:11060"/>
        <dbReference type="Rhea" id="RHEA-COMP:11605"/>
        <dbReference type="ChEBI" id="CHEBI:15378"/>
        <dbReference type="ChEBI" id="CHEBI:30013"/>
        <dbReference type="ChEBI" id="CHEBI:30616"/>
        <dbReference type="ChEBI" id="CHEBI:61977"/>
        <dbReference type="ChEBI" id="CHEBI:456216"/>
        <dbReference type="EC" id="2.7.11.22"/>
    </reaction>
</comment>
<comment type="catalytic activity">
    <reaction>
        <text>[DNA-directed RNA polymerase] + ATP = phospho-[DNA-directed RNA polymerase] + ADP + H(+)</text>
        <dbReference type="Rhea" id="RHEA:10216"/>
        <dbReference type="Rhea" id="RHEA-COMP:11321"/>
        <dbReference type="Rhea" id="RHEA-COMP:11322"/>
        <dbReference type="ChEBI" id="CHEBI:15378"/>
        <dbReference type="ChEBI" id="CHEBI:30616"/>
        <dbReference type="ChEBI" id="CHEBI:43176"/>
        <dbReference type="ChEBI" id="CHEBI:68546"/>
        <dbReference type="ChEBI" id="CHEBI:456216"/>
        <dbReference type="EC" id="2.7.11.23"/>
    </reaction>
</comment>
<comment type="cofactor">
    <cofactor evidence="1">
        <name>Mg(2+)</name>
        <dbReference type="ChEBI" id="CHEBI:18420"/>
    </cofactor>
</comment>
<comment type="subunit">
    <text evidence="1">Component of the srb8-11 complex, a regulatory module of the Mediator complex.</text>
</comment>
<comment type="subcellular location">
    <subcellularLocation>
        <location evidence="5">Nucleus</location>
    </subcellularLocation>
</comment>
<comment type="similarity">
    <text evidence="5">Belongs to the protein kinase superfamily. CMGC Ser/Thr protein kinase family. CDC2/CDKX subfamily.</text>
</comment>
<comment type="sequence caution" evidence="5">
    <conflict type="erroneous gene model prediction">
        <sequence resource="EMBL-CDS" id="EAT76508"/>
    </conflict>
</comment>
<reference key="1">
    <citation type="journal article" date="2007" name="Plant Cell">
        <title>Dothideomycete-plant interactions illuminated by genome sequencing and EST analysis of the wheat pathogen Stagonospora nodorum.</title>
        <authorList>
            <person name="Hane J.K."/>
            <person name="Lowe R.G.T."/>
            <person name="Solomon P.S."/>
            <person name="Tan K.-C."/>
            <person name="Schoch C.L."/>
            <person name="Spatafora J.W."/>
            <person name="Crous P.W."/>
            <person name="Kodira C.D."/>
            <person name="Birren B.W."/>
            <person name="Galagan J.E."/>
            <person name="Torriani S.F.F."/>
            <person name="McDonald B.A."/>
            <person name="Oliver R.P."/>
        </authorList>
    </citation>
    <scope>NUCLEOTIDE SEQUENCE [LARGE SCALE GENOMIC DNA]</scope>
    <source>
        <strain>SN15 / ATCC MYA-4574 / FGSC 10173</strain>
    </source>
</reference>
<protein>
    <recommendedName>
        <fullName>Serine/threonine-protein kinase SSN3</fullName>
        <ecNumber>2.7.11.22</ecNumber>
        <ecNumber>2.7.11.23</ecNumber>
    </recommendedName>
    <alternativeName>
        <fullName>Cyclin-dependent kinase 8</fullName>
    </alternativeName>
</protein>
<proteinExistence type="inferred from homology"/>
<organism>
    <name type="scientific">Phaeosphaeria nodorum (strain SN15 / ATCC MYA-4574 / FGSC 10173)</name>
    <name type="common">Glume blotch fungus</name>
    <name type="synonym">Parastagonospora nodorum</name>
    <dbReference type="NCBI Taxonomy" id="321614"/>
    <lineage>
        <taxon>Eukaryota</taxon>
        <taxon>Fungi</taxon>
        <taxon>Dikarya</taxon>
        <taxon>Ascomycota</taxon>
        <taxon>Pezizomycotina</taxon>
        <taxon>Dothideomycetes</taxon>
        <taxon>Pleosporomycetidae</taxon>
        <taxon>Pleosporales</taxon>
        <taxon>Pleosporineae</taxon>
        <taxon>Phaeosphaeriaceae</taxon>
        <taxon>Parastagonospora</taxon>
    </lineage>
</organism>
<accession>Q0TWJ7</accession>
<sequence length="443" mass="49756">MERKRGREMNPPSADPPSATPVARANLPGSVAAAFHGRPCSQGTTTLKRVNERYKIVGFISSGTYGRVYKAEGKNGRTGEFAIKKFKPDKEGELQYSGISQSAIREMALCTELAHPNVVHTVEIILEEKCIFIVFEYAEHDLLQIIHHHNQPQRQAIPARTIKSILYQLLQGLVYLHRNWVMHRDLKPANIMVTSAGKVKIGDLGLARLFYKPLQSLFSGDKVVVTIWYRAPELLLGSRHYTPAVDLWAVGCIFAELLSLRPIFKGEEAKMDSKKTVPFQRNQMQKIVEIMGMPSKDRWPLLTAMPEYPQLSSLIAGNAARFARPQGGDGLDRWYNQTLINNQYPAGPGPETPGAEGLALLKQLLEYDPQKRLTAEKALEHRYFTEHGKPSDNCFEDSKIKYPVRRVSQEDNDIRTSSLPGTKRSGLPDDSLMGRPAKRLKEG</sequence>
<gene>
    <name type="primary">SSN3</name>
    <name type="synonym">CDK8</name>
    <name type="ORF">SNOG_16136</name>
</gene>
<feature type="chain" id="PRO_0000312949" description="Serine/threonine-protein kinase SSN3">
    <location>
        <begin position="1"/>
        <end position="443"/>
    </location>
</feature>
<feature type="domain" description="Protein kinase" evidence="2">
    <location>
        <begin position="54"/>
        <end position="384"/>
    </location>
</feature>
<feature type="region of interest" description="Disordered" evidence="4">
    <location>
        <begin position="1"/>
        <end position="24"/>
    </location>
</feature>
<feature type="region of interest" description="Disordered" evidence="4">
    <location>
        <begin position="405"/>
        <end position="443"/>
    </location>
</feature>
<feature type="active site" description="Proton acceptor" evidence="2 3">
    <location>
        <position position="185"/>
    </location>
</feature>
<feature type="binding site" evidence="2">
    <location>
        <begin position="60"/>
        <end position="68"/>
    </location>
    <ligand>
        <name>ATP</name>
        <dbReference type="ChEBI" id="CHEBI:30616"/>
    </ligand>
</feature>
<feature type="binding site" evidence="2">
    <location>
        <position position="84"/>
    </location>
    <ligand>
        <name>ATP</name>
        <dbReference type="ChEBI" id="CHEBI:30616"/>
    </ligand>
</feature>
<evidence type="ECO:0000250" key="1"/>
<evidence type="ECO:0000255" key="2">
    <source>
        <dbReference type="PROSITE-ProRule" id="PRU00159"/>
    </source>
</evidence>
<evidence type="ECO:0000255" key="3">
    <source>
        <dbReference type="PROSITE-ProRule" id="PRU10027"/>
    </source>
</evidence>
<evidence type="ECO:0000256" key="4">
    <source>
        <dbReference type="SAM" id="MobiDB-lite"/>
    </source>
</evidence>
<evidence type="ECO:0000305" key="5"/>
<dbReference type="EC" id="2.7.11.22"/>
<dbReference type="EC" id="2.7.11.23"/>
<dbReference type="EMBL" id="CH445367">
    <property type="protein sequence ID" value="EAT76508.2"/>
    <property type="status" value="ALT_SEQ"/>
    <property type="molecule type" value="Genomic_DNA"/>
</dbReference>
<dbReference type="RefSeq" id="XP_001806263.1">
    <property type="nucleotide sequence ID" value="XM_001806211.1"/>
</dbReference>
<dbReference type="SMR" id="Q0TWJ7"/>
<dbReference type="FunCoup" id="Q0TWJ7">
    <property type="interactions" value="980"/>
</dbReference>
<dbReference type="STRING" id="321614.Q0TWJ7"/>
<dbReference type="GeneID" id="5983193"/>
<dbReference type="KEGG" id="pno:SNOG_16136"/>
<dbReference type="VEuPathDB" id="FungiDB:JI435_161360"/>
<dbReference type="eggNOG" id="KOG0666">
    <property type="taxonomic scope" value="Eukaryota"/>
</dbReference>
<dbReference type="InParanoid" id="Q0TWJ7"/>
<dbReference type="OMA" id="YFKNGGP"/>
<dbReference type="Proteomes" id="UP000001055">
    <property type="component" value="Unassembled WGS sequence"/>
</dbReference>
<dbReference type="GO" id="GO:0016592">
    <property type="term" value="C:mediator complex"/>
    <property type="evidence" value="ECO:0000318"/>
    <property type="project" value="GO_Central"/>
</dbReference>
<dbReference type="GO" id="GO:0005634">
    <property type="term" value="C:nucleus"/>
    <property type="evidence" value="ECO:0000318"/>
    <property type="project" value="GO_Central"/>
</dbReference>
<dbReference type="GO" id="GO:0005524">
    <property type="term" value="F:ATP binding"/>
    <property type="evidence" value="ECO:0007669"/>
    <property type="project" value="UniProtKB-KW"/>
</dbReference>
<dbReference type="GO" id="GO:0004693">
    <property type="term" value="F:cyclin-dependent protein serine/threonine kinase activity"/>
    <property type="evidence" value="ECO:0000318"/>
    <property type="project" value="GO_Central"/>
</dbReference>
<dbReference type="GO" id="GO:0046872">
    <property type="term" value="F:metal ion binding"/>
    <property type="evidence" value="ECO:0007669"/>
    <property type="project" value="UniProtKB-KW"/>
</dbReference>
<dbReference type="GO" id="GO:0106310">
    <property type="term" value="F:protein serine kinase activity"/>
    <property type="evidence" value="ECO:0007669"/>
    <property type="project" value="RHEA"/>
</dbReference>
<dbReference type="GO" id="GO:0008353">
    <property type="term" value="F:RNA polymerase II CTD heptapeptide repeat kinase activity"/>
    <property type="evidence" value="ECO:0007669"/>
    <property type="project" value="UniProtKB-EC"/>
</dbReference>
<dbReference type="CDD" id="cd07842">
    <property type="entry name" value="STKc_CDK8_like"/>
    <property type="match status" value="1"/>
</dbReference>
<dbReference type="FunFam" id="1.10.510.10:FF:000408">
    <property type="entry name" value="Serine/threonine-protein kinase SSN3"/>
    <property type="match status" value="1"/>
</dbReference>
<dbReference type="FunFam" id="3.30.200.20:FF:000426">
    <property type="entry name" value="Serine/threonine-protein kinase ssn3"/>
    <property type="match status" value="1"/>
</dbReference>
<dbReference type="Gene3D" id="3.30.200.20">
    <property type="entry name" value="Phosphorylase Kinase, domain 1"/>
    <property type="match status" value="1"/>
</dbReference>
<dbReference type="Gene3D" id="1.10.510.10">
    <property type="entry name" value="Transferase(Phosphotransferase) domain 1"/>
    <property type="match status" value="1"/>
</dbReference>
<dbReference type="InterPro" id="IPR050108">
    <property type="entry name" value="CDK"/>
</dbReference>
<dbReference type="InterPro" id="IPR011009">
    <property type="entry name" value="Kinase-like_dom_sf"/>
</dbReference>
<dbReference type="InterPro" id="IPR000719">
    <property type="entry name" value="Prot_kinase_dom"/>
</dbReference>
<dbReference type="InterPro" id="IPR008271">
    <property type="entry name" value="Ser/Thr_kinase_AS"/>
</dbReference>
<dbReference type="PANTHER" id="PTHR24056">
    <property type="entry name" value="CELL DIVISION PROTEIN KINASE"/>
    <property type="match status" value="1"/>
</dbReference>
<dbReference type="PANTHER" id="PTHR24056:SF495">
    <property type="entry name" value="CYCLIN-DEPENDENT KINASE 8-RELATED"/>
    <property type="match status" value="1"/>
</dbReference>
<dbReference type="Pfam" id="PF00069">
    <property type="entry name" value="Pkinase"/>
    <property type="match status" value="1"/>
</dbReference>
<dbReference type="SMART" id="SM00220">
    <property type="entry name" value="S_TKc"/>
    <property type="match status" value="1"/>
</dbReference>
<dbReference type="SUPFAM" id="SSF56112">
    <property type="entry name" value="Protein kinase-like (PK-like)"/>
    <property type="match status" value="1"/>
</dbReference>
<dbReference type="PROSITE" id="PS50011">
    <property type="entry name" value="PROTEIN_KINASE_DOM"/>
    <property type="match status" value="1"/>
</dbReference>
<dbReference type="PROSITE" id="PS00108">
    <property type="entry name" value="PROTEIN_KINASE_ST"/>
    <property type="match status" value="1"/>
</dbReference>
<keyword id="KW-0010">Activator</keyword>
<keyword id="KW-0067">ATP-binding</keyword>
<keyword id="KW-0418">Kinase</keyword>
<keyword id="KW-0460">Magnesium</keyword>
<keyword id="KW-0479">Metal-binding</keyword>
<keyword id="KW-0547">Nucleotide-binding</keyword>
<keyword id="KW-0539">Nucleus</keyword>
<keyword id="KW-0678">Repressor</keyword>
<keyword id="KW-0723">Serine/threonine-protein kinase</keyword>
<keyword id="KW-0804">Transcription</keyword>
<keyword id="KW-0805">Transcription regulation</keyword>
<keyword id="KW-0808">Transferase</keyword>
<name>SSN3_PHANO</name>